<accession>A0A2Z4HPY4</accession>
<name>EFUA_HORCR</name>
<organism>
    <name type="scientific">Hormonema carpetanum</name>
    <dbReference type="NCBI Taxonomy" id="284138"/>
    <lineage>
        <taxon>Eukaryota</taxon>
        <taxon>Fungi</taxon>
        <taxon>Dikarya</taxon>
        <taxon>Ascomycota</taxon>
        <taxon>Pezizomycotina</taxon>
        <taxon>Dothideomycetes</taxon>
        <taxon>Dothideomycetidae</taxon>
        <taxon>Dothideales</taxon>
        <taxon>Dothioraceae</taxon>
        <taxon>Hormonema</taxon>
    </lineage>
</organism>
<feature type="chain" id="PRO_0000454456" description="Enfumafungin synthase efuA">
    <location>
        <begin position="1"/>
        <end position="1314"/>
    </location>
</feature>
<feature type="transmembrane region" description="Helical" evidence="2">
    <location>
        <begin position="133"/>
        <end position="153"/>
    </location>
</feature>
<feature type="transmembrane region" description="Helical" evidence="2">
    <location>
        <begin position="155"/>
        <end position="175"/>
    </location>
</feature>
<feature type="transmembrane region" description="Helical" evidence="2">
    <location>
        <begin position="230"/>
        <end position="250"/>
    </location>
</feature>
<feature type="transmembrane region" description="Helical" evidence="2">
    <location>
        <begin position="1200"/>
        <end position="1220"/>
    </location>
</feature>
<feature type="repeat" description="PFTB 1" evidence="2">
    <location>
        <begin position="19"/>
        <end position="62"/>
    </location>
</feature>
<feature type="repeat" description="PFTB 2" evidence="2">
    <location>
        <begin position="66"/>
        <end position="107"/>
    </location>
</feature>
<feature type="repeat" description="PFTB 3" evidence="2">
    <location>
        <begin position="260"/>
        <end position="300"/>
    </location>
</feature>
<feature type="repeat" description="PFTB 4" evidence="2">
    <location>
        <begin position="417"/>
        <end position="458"/>
    </location>
</feature>
<feature type="repeat" description="PFTB 5" evidence="2">
    <location>
        <begin position="546"/>
        <end position="597"/>
    </location>
</feature>
<feature type="region of interest" description="Terpenne cyclase" evidence="5">
    <location>
        <begin position="1"/>
        <end position="680"/>
    </location>
</feature>
<feature type="region of interest" description="Glycosyltransferase" evidence="5">
    <location>
        <begin position="681"/>
        <end position="1314"/>
    </location>
</feature>
<feature type="region of interest" description="Disordered" evidence="3">
    <location>
        <begin position="1289"/>
        <end position="1314"/>
    </location>
</feature>
<feature type="compositionally biased region" description="Low complexity" evidence="3">
    <location>
        <begin position="1292"/>
        <end position="1302"/>
    </location>
</feature>
<feature type="active site" description="Proton donor" evidence="1">
    <location>
        <position position="395"/>
    </location>
</feature>
<feature type="site" description="Transition state stabilizer" evidence="1">
    <location>
        <position position="331"/>
    </location>
</feature>
<feature type="site" description="Transition state stabilizer" evidence="1">
    <location>
        <position position="384"/>
    </location>
</feature>
<feature type="site" description="Transition state stabilizer" evidence="1">
    <location>
        <position position="517"/>
    </location>
</feature>
<sequence>MPSYHNTDKTLLGDARQSLQQAVDYSLGCQQPDGHWVAPVMADATFTAQYVFFKHQIPELSLDEDGPEIQRWLLGEQTADGSWTLAPDLPGNLSTTVEAYLALRILGVPKSDQAMLRARDFVVRNGGVEGVRFFTRFFLATFGLVPWTAIPQMPAELILLPTFMFLNIYVLSSWARSTLIPILLVRHHEPVYALPNGQSANNNFLDELWCNPGEKNIPFALPLWDLLRRYQWIEFAFTLLDHILALFGGLRRWPCRHMALKRCTAWLLEHQEESGDWAGFFPPIHGSIWALLLDGFSFQSEVIRLGMEALERLVVIDPKGKWVQSTVSPCWDTALMANALCDAGMSGDTRLAKATQWLRDRQLMVSHGDWRNYANTQQAGGWSFQYFNSFYPDVDDTAVVIMTLIKEDPNCTNSDCVMNGVEWMLGMQSRDGGWGAFDVNNNARWLHKIPFSDMDSLVDPSTSDVTGRILECLGLLLSQRKSPLSPRWRHRLQASSAKAIAFLAKEQESSGAWWGRWGNNYHYGTANVLRGLAWFAQTDPSAQMMCMRTLSWIDETQNADGGWGETLASYVDKSLAGLGRSTAAHTAWALESLLRFRLPSDQAIERGVRWLIDNQQPNVDGYYYGTKWQAGAGQGASWRFDHAYVGTGFPSVLYLGYPYYHHLFPIQALSRYIDKASRQGIETLRIPSSSAVILDRPNVLLMAMGSRGDIQVFLNVTKRLSSCRVRIATHPAHQAKVEGHGFEFYDVGGSPEVFSAALANGHGILRSIIDGRFRELQHLLRSIYRSFWVAALDDVQSHSPLKPESSSRPFIADVVVSGPSTSVHVHAAERAQAPLVIISTQPAIITGDFQSPLTMSRAQFNPSRLWNRISFHMLAFFDWLSFGPSFNRMRANSYQLRSLDLAWALFEFVKVSVPHVCLWSTSLAPKPEDWDNNVIIAGYSSMSDDADDVASKSLQAFLETRQPVVAISFGSATIEDPMKLIKLMSAALVKVGASSVVCRSWDSSFEAEADLPSNVFLVDSIPHGWLLQHVEGFVHHGGAGHTAAGAKAGVSQLVMPQFLDQFFWATKVSEMGLGPTPLPLRELFLDELAPRMEDLLSSKYTKACTNMALQLRGDVDGADVAGDEILRQVEAITTCCIFPELSAHWYCTESDLSLSGAAAASLVSSKEIQWQDLELRPAKDWEQQWRTVRSSSNLVRIWRAIVQLLYGFTTTILALFGWLKGTHGYLDGDRHLIKMEDPLRQARLEQAQFDLHLIHQACDSGSSTSLDAKIIENWKARKAVVIHEVFDDDSGASESSRSSLDGGHADSVLDIEEK</sequence>
<gene>
    <name evidence="5" type="primary">efuA</name>
</gene>
<reference key="1">
    <citation type="journal article" date="2018" name="Environ. Microbiol.">
        <title>Enfumafungin synthase represents a novel lineage of fungal triterpene cyclases.</title>
        <authorList>
            <person name="Kuhnert E."/>
            <person name="Li Y."/>
            <person name="Lan N."/>
            <person name="Yue Q."/>
            <person name="Chen L."/>
            <person name="Cox R.J."/>
            <person name="An Z."/>
            <person name="Yokoyama K."/>
            <person name="Bills G.F."/>
        </authorList>
    </citation>
    <scope>NUCLEOTIDE SEQUENCE [GENOMIC DNA]</scope>
    <scope>FUNCTION</scope>
    <scope>DISRUPTION PHENOTYPE</scope>
    <scope>PATHWAY</scope>
</reference>
<dbReference type="EC" id="5.4.99.-" evidence="7"/>
<dbReference type="EC" id="2.4.1.-" evidence="7"/>
<dbReference type="EMBL" id="MF611888">
    <property type="protein sequence ID" value="AWW17216.1"/>
    <property type="molecule type" value="Genomic_DNA"/>
</dbReference>
<dbReference type="SMR" id="A0A2Z4HPY4"/>
<dbReference type="UniPathway" id="UPA00213"/>
<dbReference type="GO" id="GO:0005811">
    <property type="term" value="C:lipid droplet"/>
    <property type="evidence" value="ECO:0007669"/>
    <property type="project" value="InterPro"/>
</dbReference>
<dbReference type="GO" id="GO:0016020">
    <property type="term" value="C:membrane"/>
    <property type="evidence" value="ECO:0007669"/>
    <property type="project" value="UniProtKB-SubCell"/>
</dbReference>
<dbReference type="GO" id="GO:0016866">
    <property type="term" value="F:intramolecular transferase activity"/>
    <property type="evidence" value="ECO:0007669"/>
    <property type="project" value="InterPro"/>
</dbReference>
<dbReference type="GO" id="GO:0016906">
    <property type="term" value="F:sterol 3-beta-glucosyltransferase activity"/>
    <property type="evidence" value="ECO:0007669"/>
    <property type="project" value="UniProtKB-ARBA"/>
</dbReference>
<dbReference type="GO" id="GO:0005975">
    <property type="term" value="P:carbohydrate metabolic process"/>
    <property type="evidence" value="ECO:0007669"/>
    <property type="project" value="InterPro"/>
</dbReference>
<dbReference type="GO" id="GO:0030259">
    <property type="term" value="P:lipid glycosylation"/>
    <property type="evidence" value="ECO:0007669"/>
    <property type="project" value="InterPro"/>
</dbReference>
<dbReference type="GO" id="GO:0016104">
    <property type="term" value="P:triterpenoid biosynthetic process"/>
    <property type="evidence" value="ECO:0007669"/>
    <property type="project" value="InterPro"/>
</dbReference>
<dbReference type="CDD" id="cd03784">
    <property type="entry name" value="GT1_Gtf-like"/>
    <property type="match status" value="1"/>
</dbReference>
<dbReference type="FunFam" id="3.40.50.2000:FF:000009">
    <property type="entry name" value="Sterol 3-beta-glucosyltransferase UGT80A2"/>
    <property type="match status" value="1"/>
</dbReference>
<dbReference type="Gene3D" id="1.50.10.20">
    <property type="match status" value="2"/>
</dbReference>
<dbReference type="Gene3D" id="3.40.50.2000">
    <property type="entry name" value="Glycogen Phosphorylase B"/>
    <property type="match status" value="2"/>
</dbReference>
<dbReference type="InterPro" id="IPR010610">
    <property type="entry name" value="EryCIII-like_C"/>
</dbReference>
<dbReference type="InterPro" id="IPR050426">
    <property type="entry name" value="Glycosyltransferase_28"/>
</dbReference>
<dbReference type="InterPro" id="IPR004276">
    <property type="entry name" value="GlycoTrans_28_N"/>
</dbReference>
<dbReference type="InterPro" id="IPR006400">
    <property type="entry name" value="Hopene-cyclase"/>
</dbReference>
<dbReference type="InterPro" id="IPR032696">
    <property type="entry name" value="SQ_cyclase_C"/>
</dbReference>
<dbReference type="InterPro" id="IPR032697">
    <property type="entry name" value="SQ_cyclase_N"/>
</dbReference>
<dbReference type="InterPro" id="IPR018333">
    <property type="entry name" value="Squalene_cyclase"/>
</dbReference>
<dbReference type="InterPro" id="IPR008930">
    <property type="entry name" value="Terpenoid_cyclase/PrenylTrfase"/>
</dbReference>
<dbReference type="InterPro" id="IPR002213">
    <property type="entry name" value="UDP_glucos_trans"/>
</dbReference>
<dbReference type="NCBIfam" id="TIGR01507">
    <property type="entry name" value="hopene_cyclase"/>
    <property type="match status" value="1"/>
</dbReference>
<dbReference type="NCBIfam" id="TIGR01787">
    <property type="entry name" value="squalene_cyclas"/>
    <property type="match status" value="1"/>
</dbReference>
<dbReference type="PANTHER" id="PTHR48050">
    <property type="entry name" value="STEROL 3-BETA-GLUCOSYLTRANSFERASE"/>
    <property type="match status" value="1"/>
</dbReference>
<dbReference type="PANTHER" id="PTHR48050:SF13">
    <property type="entry name" value="STEROL 3-BETA-GLUCOSYLTRANSFERASE UGT80A2"/>
    <property type="match status" value="1"/>
</dbReference>
<dbReference type="Pfam" id="PF06722">
    <property type="entry name" value="EryCIII-like_C"/>
    <property type="match status" value="1"/>
</dbReference>
<dbReference type="Pfam" id="PF03033">
    <property type="entry name" value="Glyco_transf_28"/>
    <property type="match status" value="1"/>
</dbReference>
<dbReference type="Pfam" id="PF13243">
    <property type="entry name" value="SQHop_cyclase_C"/>
    <property type="match status" value="1"/>
</dbReference>
<dbReference type="Pfam" id="PF13249">
    <property type="entry name" value="SQHop_cyclase_N"/>
    <property type="match status" value="1"/>
</dbReference>
<dbReference type="SFLD" id="SFLDG01016">
    <property type="entry name" value="Prenyltransferase_Like_2"/>
    <property type="match status" value="1"/>
</dbReference>
<dbReference type="SUPFAM" id="SSF48239">
    <property type="entry name" value="Terpenoid cyclases/Protein prenyltransferases"/>
    <property type="match status" value="2"/>
</dbReference>
<dbReference type="SUPFAM" id="SSF53756">
    <property type="entry name" value="UDP-Glycosyltransferase/glycogen phosphorylase"/>
    <property type="match status" value="1"/>
</dbReference>
<proteinExistence type="inferred from homology"/>
<comment type="function">
    <text evidence="4 7">Terpene cyclase-glycosyl transferase fusion protein; part of the gene cluster that mediates the biosynthesis of enfumafungin, a glycosylated fernene-type triterpenoid with potent antifungal activity, mediated by its interaction with beta-1,3-glucan synthase and the fungal cell wall (PubMed:30051576). The pathway begins with the terpene cyclase-glycosyl transferase fusion protein that most likely uses 2,3-oxidosqualene as substrate and catalyzes glycosylation immediately after cyclization (Probable). The fernene glycoside then could be processed by the desaturase efuI which catalyzes isomerization of a double bond established by efuA to form the core structure (Probable). The latter would then undergo a series of hydroxylations in unknown order at C-2, C-19, C-23 and C-25, which would be catalyzed by two of the three cytochrome P450 monooxygenases efuB, efuG or efuH (Probable). The hydroxy-group at C-25 becomes oxidized by the dehydrogenase efuE to enable a spontaneous, non-enzymatic hemiacetal formation with C-23 (Probable). After hydroxylation at C-2, acetylation by the acetyltransferase efuC takes place (Probable). The final steps in enfumafungin biosynthesis require expansion of the 5-membered ring by lactonization via a Baeyer-Villiger reaction mediated by one of the BGC's cytochrome P450 monooxygenases (efuB, efuG or efuH) followed by ring cleavage (Probable). This type of reaction would establish a double bond between C-20 and C-21 which could be reduced by the reductase efuL to form the final product (Probable).</text>
</comment>
<comment type="pathway">
    <text evidence="7">Secondary metabolite biosynthesis; terpenoid biosynthesis.</text>
</comment>
<comment type="subcellular location">
    <subcellularLocation>
        <location evidence="2">Membrane</location>
        <topology evidence="2">Multi-pass membrane protein</topology>
    </subcellularLocation>
</comment>
<comment type="disruption phenotype">
    <text evidence="4">Abolishes the production of enfumafungin and loses antifungal activity.</text>
</comment>
<comment type="similarity">
    <text evidence="6">In the N-terminal section; belongs to the terpene cyclase/mutase family.</text>
</comment>
<comment type="similarity">
    <text evidence="6">In the C-terminal section; belongs to the glycosyltransferase 28 family.</text>
</comment>
<protein>
    <recommendedName>
        <fullName evidence="5">Enfumafungin synthase efuA</fullName>
    </recommendedName>
    <alternativeName>
        <fullName evidence="5">Enfumafungin biosynthesis cluster protein A</fullName>
    </alternativeName>
    <alternativeName>
        <fullName evidence="5">Terpene cyclase-glycosyl transferase fusion protein efuA</fullName>
    </alternativeName>
    <domain>
        <recommendedName>
            <fullName evidence="5">Terpene cyclase</fullName>
            <ecNumber evidence="7">5.4.99.-</ecNumber>
        </recommendedName>
    </domain>
    <domain>
        <recommendedName>
            <fullName evidence="5">Glycosyl transferase</fullName>
            <ecNumber evidence="7">2.4.1.-</ecNumber>
        </recommendedName>
    </domain>
</protein>
<keyword id="KW-0413">Isomerase</keyword>
<keyword id="KW-0472">Membrane</keyword>
<keyword id="KW-0677">Repeat</keyword>
<keyword id="KW-0808">Transferase</keyword>
<keyword id="KW-0812">Transmembrane</keyword>
<keyword id="KW-1133">Transmembrane helix</keyword>
<evidence type="ECO:0000250" key="1">
    <source>
        <dbReference type="UniProtKB" id="P48449"/>
    </source>
</evidence>
<evidence type="ECO:0000255" key="2"/>
<evidence type="ECO:0000256" key="3">
    <source>
        <dbReference type="SAM" id="MobiDB-lite"/>
    </source>
</evidence>
<evidence type="ECO:0000269" key="4">
    <source>
    </source>
</evidence>
<evidence type="ECO:0000303" key="5">
    <source>
    </source>
</evidence>
<evidence type="ECO:0000305" key="6"/>
<evidence type="ECO:0000305" key="7">
    <source>
    </source>
</evidence>